<feature type="chain" id="PRO_0000350492" description="Probable dual-specificity RNA methyltransferase RlmN">
    <location>
        <begin position="1"/>
        <end position="357"/>
    </location>
</feature>
<feature type="domain" description="Radical SAM core" evidence="2">
    <location>
        <begin position="105"/>
        <end position="343"/>
    </location>
</feature>
<feature type="active site" description="Proton acceptor" evidence="1">
    <location>
        <position position="95"/>
    </location>
</feature>
<feature type="active site" description="S-methylcysteine intermediate" evidence="1">
    <location>
        <position position="348"/>
    </location>
</feature>
<feature type="binding site" evidence="1">
    <location>
        <position position="119"/>
    </location>
    <ligand>
        <name>[4Fe-4S] cluster</name>
        <dbReference type="ChEBI" id="CHEBI:49883"/>
        <note>4Fe-4S-S-AdoMet</note>
    </ligand>
</feature>
<feature type="binding site" evidence="1">
    <location>
        <position position="123"/>
    </location>
    <ligand>
        <name>[4Fe-4S] cluster</name>
        <dbReference type="ChEBI" id="CHEBI:49883"/>
        <note>4Fe-4S-S-AdoMet</note>
    </ligand>
</feature>
<feature type="binding site" evidence="1">
    <location>
        <position position="126"/>
    </location>
    <ligand>
        <name>[4Fe-4S] cluster</name>
        <dbReference type="ChEBI" id="CHEBI:49883"/>
        <note>4Fe-4S-S-AdoMet</note>
    </ligand>
</feature>
<feature type="binding site" evidence="1">
    <location>
        <begin position="174"/>
        <end position="175"/>
    </location>
    <ligand>
        <name>S-adenosyl-L-methionine</name>
        <dbReference type="ChEBI" id="CHEBI:59789"/>
    </ligand>
</feature>
<feature type="binding site" evidence="1">
    <location>
        <position position="206"/>
    </location>
    <ligand>
        <name>S-adenosyl-L-methionine</name>
        <dbReference type="ChEBI" id="CHEBI:59789"/>
    </ligand>
</feature>
<feature type="binding site" evidence="1">
    <location>
        <begin position="229"/>
        <end position="231"/>
    </location>
    <ligand>
        <name>S-adenosyl-L-methionine</name>
        <dbReference type="ChEBI" id="CHEBI:59789"/>
    </ligand>
</feature>
<feature type="binding site" evidence="1">
    <location>
        <position position="305"/>
    </location>
    <ligand>
        <name>S-adenosyl-L-methionine</name>
        <dbReference type="ChEBI" id="CHEBI:59789"/>
    </ligand>
</feature>
<feature type="disulfide bond" description="(transient)" evidence="1">
    <location>
        <begin position="112"/>
        <end position="348"/>
    </location>
</feature>
<gene>
    <name evidence="1" type="primary">rlmN</name>
    <name type="ordered locus">Swol_1227</name>
</gene>
<keyword id="KW-0004">4Fe-4S</keyword>
<keyword id="KW-0963">Cytoplasm</keyword>
<keyword id="KW-1015">Disulfide bond</keyword>
<keyword id="KW-0408">Iron</keyword>
<keyword id="KW-0411">Iron-sulfur</keyword>
<keyword id="KW-0479">Metal-binding</keyword>
<keyword id="KW-0489">Methyltransferase</keyword>
<keyword id="KW-1185">Reference proteome</keyword>
<keyword id="KW-0698">rRNA processing</keyword>
<keyword id="KW-0949">S-adenosyl-L-methionine</keyword>
<keyword id="KW-0808">Transferase</keyword>
<keyword id="KW-0819">tRNA processing</keyword>
<dbReference type="EC" id="2.1.1.192" evidence="1"/>
<dbReference type="EMBL" id="CP000448">
    <property type="protein sequence ID" value="ABI68536.1"/>
    <property type="molecule type" value="Genomic_DNA"/>
</dbReference>
<dbReference type="RefSeq" id="WP_011640639.1">
    <property type="nucleotide sequence ID" value="NC_008346.1"/>
</dbReference>
<dbReference type="SMR" id="Q0AXL8"/>
<dbReference type="STRING" id="335541.Swol_1227"/>
<dbReference type="KEGG" id="swo:Swol_1227"/>
<dbReference type="eggNOG" id="COG0820">
    <property type="taxonomic scope" value="Bacteria"/>
</dbReference>
<dbReference type="HOGENOM" id="CLU_029101_2_0_9"/>
<dbReference type="OrthoDB" id="9793973at2"/>
<dbReference type="Proteomes" id="UP000001968">
    <property type="component" value="Chromosome"/>
</dbReference>
<dbReference type="GO" id="GO:0005737">
    <property type="term" value="C:cytoplasm"/>
    <property type="evidence" value="ECO:0007669"/>
    <property type="project" value="UniProtKB-SubCell"/>
</dbReference>
<dbReference type="GO" id="GO:0051539">
    <property type="term" value="F:4 iron, 4 sulfur cluster binding"/>
    <property type="evidence" value="ECO:0007669"/>
    <property type="project" value="UniProtKB-UniRule"/>
</dbReference>
<dbReference type="GO" id="GO:0046872">
    <property type="term" value="F:metal ion binding"/>
    <property type="evidence" value="ECO:0007669"/>
    <property type="project" value="UniProtKB-KW"/>
</dbReference>
<dbReference type="GO" id="GO:0070040">
    <property type="term" value="F:rRNA (adenine(2503)-C2-)-methyltransferase activity"/>
    <property type="evidence" value="ECO:0007669"/>
    <property type="project" value="UniProtKB-UniRule"/>
</dbReference>
<dbReference type="GO" id="GO:0019843">
    <property type="term" value="F:rRNA binding"/>
    <property type="evidence" value="ECO:0007669"/>
    <property type="project" value="UniProtKB-UniRule"/>
</dbReference>
<dbReference type="GO" id="GO:0002935">
    <property type="term" value="F:tRNA (adenine(37)-C2)-methyltransferase activity"/>
    <property type="evidence" value="ECO:0007669"/>
    <property type="project" value="UniProtKB-UniRule"/>
</dbReference>
<dbReference type="GO" id="GO:0000049">
    <property type="term" value="F:tRNA binding"/>
    <property type="evidence" value="ECO:0007669"/>
    <property type="project" value="UniProtKB-UniRule"/>
</dbReference>
<dbReference type="GO" id="GO:0070475">
    <property type="term" value="P:rRNA base methylation"/>
    <property type="evidence" value="ECO:0007669"/>
    <property type="project" value="UniProtKB-UniRule"/>
</dbReference>
<dbReference type="GO" id="GO:0030488">
    <property type="term" value="P:tRNA methylation"/>
    <property type="evidence" value="ECO:0007669"/>
    <property type="project" value="UniProtKB-UniRule"/>
</dbReference>
<dbReference type="FunFam" id="3.20.20.70:FF:000014">
    <property type="entry name" value="Probable dual-specificity RNA methyltransferase RlmN"/>
    <property type="match status" value="1"/>
</dbReference>
<dbReference type="Gene3D" id="1.10.150.530">
    <property type="match status" value="1"/>
</dbReference>
<dbReference type="Gene3D" id="3.20.20.70">
    <property type="entry name" value="Aldolase class I"/>
    <property type="match status" value="1"/>
</dbReference>
<dbReference type="HAMAP" id="MF_01849">
    <property type="entry name" value="RNA_methyltr_RlmN"/>
    <property type="match status" value="1"/>
</dbReference>
<dbReference type="InterPro" id="IPR013785">
    <property type="entry name" value="Aldolase_TIM"/>
</dbReference>
<dbReference type="InterPro" id="IPR040072">
    <property type="entry name" value="Methyltransferase_A"/>
</dbReference>
<dbReference type="InterPro" id="IPR048641">
    <property type="entry name" value="RlmN_N"/>
</dbReference>
<dbReference type="InterPro" id="IPR027492">
    <property type="entry name" value="RNA_MTrfase_RlmN"/>
</dbReference>
<dbReference type="InterPro" id="IPR004383">
    <property type="entry name" value="rRNA_lsu_MTrfase_RlmN/Cfr"/>
</dbReference>
<dbReference type="InterPro" id="IPR007197">
    <property type="entry name" value="rSAM"/>
</dbReference>
<dbReference type="NCBIfam" id="TIGR00048">
    <property type="entry name" value="rRNA_mod_RlmN"/>
    <property type="match status" value="1"/>
</dbReference>
<dbReference type="PANTHER" id="PTHR30544">
    <property type="entry name" value="23S RRNA METHYLTRANSFERASE"/>
    <property type="match status" value="1"/>
</dbReference>
<dbReference type="PANTHER" id="PTHR30544:SF5">
    <property type="entry name" value="RADICAL SAM CORE DOMAIN-CONTAINING PROTEIN"/>
    <property type="match status" value="1"/>
</dbReference>
<dbReference type="Pfam" id="PF04055">
    <property type="entry name" value="Radical_SAM"/>
    <property type="match status" value="1"/>
</dbReference>
<dbReference type="Pfam" id="PF21016">
    <property type="entry name" value="RlmN_N"/>
    <property type="match status" value="1"/>
</dbReference>
<dbReference type="PIRSF" id="PIRSF006004">
    <property type="entry name" value="CHP00048"/>
    <property type="match status" value="1"/>
</dbReference>
<dbReference type="SFLD" id="SFLDF00275">
    <property type="entry name" value="adenosine_C2_methyltransferase"/>
    <property type="match status" value="1"/>
</dbReference>
<dbReference type="SFLD" id="SFLDG01062">
    <property type="entry name" value="methyltransferase_(Class_A)"/>
    <property type="match status" value="1"/>
</dbReference>
<dbReference type="SUPFAM" id="SSF102114">
    <property type="entry name" value="Radical SAM enzymes"/>
    <property type="match status" value="1"/>
</dbReference>
<dbReference type="PROSITE" id="PS51918">
    <property type="entry name" value="RADICAL_SAM"/>
    <property type="match status" value="1"/>
</dbReference>
<comment type="function">
    <text evidence="1">Specifically methylates position 2 of adenine 2503 in 23S rRNA and position 2 of adenine 37 in tRNAs.</text>
</comment>
<comment type="catalytic activity">
    <reaction evidence="1">
        <text>adenosine(2503) in 23S rRNA + 2 reduced [2Fe-2S]-[ferredoxin] + 2 S-adenosyl-L-methionine = 2-methyladenosine(2503) in 23S rRNA + 5'-deoxyadenosine + L-methionine + 2 oxidized [2Fe-2S]-[ferredoxin] + S-adenosyl-L-homocysteine</text>
        <dbReference type="Rhea" id="RHEA:42916"/>
        <dbReference type="Rhea" id="RHEA-COMP:10000"/>
        <dbReference type="Rhea" id="RHEA-COMP:10001"/>
        <dbReference type="Rhea" id="RHEA-COMP:10152"/>
        <dbReference type="Rhea" id="RHEA-COMP:10282"/>
        <dbReference type="ChEBI" id="CHEBI:17319"/>
        <dbReference type="ChEBI" id="CHEBI:33737"/>
        <dbReference type="ChEBI" id="CHEBI:33738"/>
        <dbReference type="ChEBI" id="CHEBI:57844"/>
        <dbReference type="ChEBI" id="CHEBI:57856"/>
        <dbReference type="ChEBI" id="CHEBI:59789"/>
        <dbReference type="ChEBI" id="CHEBI:74411"/>
        <dbReference type="ChEBI" id="CHEBI:74497"/>
        <dbReference type="EC" id="2.1.1.192"/>
    </reaction>
</comment>
<comment type="catalytic activity">
    <reaction evidence="1">
        <text>adenosine(37) in tRNA + 2 reduced [2Fe-2S]-[ferredoxin] + 2 S-adenosyl-L-methionine = 2-methyladenosine(37) in tRNA + 5'-deoxyadenosine + L-methionine + 2 oxidized [2Fe-2S]-[ferredoxin] + S-adenosyl-L-homocysteine</text>
        <dbReference type="Rhea" id="RHEA:43332"/>
        <dbReference type="Rhea" id="RHEA-COMP:10000"/>
        <dbReference type="Rhea" id="RHEA-COMP:10001"/>
        <dbReference type="Rhea" id="RHEA-COMP:10162"/>
        <dbReference type="Rhea" id="RHEA-COMP:10485"/>
        <dbReference type="ChEBI" id="CHEBI:17319"/>
        <dbReference type="ChEBI" id="CHEBI:33737"/>
        <dbReference type="ChEBI" id="CHEBI:33738"/>
        <dbReference type="ChEBI" id="CHEBI:57844"/>
        <dbReference type="ChEBI" id="CHEBI:57856"/>
        <dbReference type="ChEBI" id="CHEBI:59789"/>
        <dbReference type="ChEBI" id="CHEBI:74411"/>
        <dbReference type="ChEBI" id="CHEBI:74497"/>
        <dbReference type="EC" id="2.1.1.192"/>
    </reaction>
</comment>
<comment type="cofactor">
    <cofactor evidence="1">
        <name>[4Fe-4S] cluster</name>
        <dbReference type="ChEBI" id="CHEBI:49883"/>
    </cofactor>
    <text evidence="1">Binds 1 [4Fe-4S] cluster. The cluster is coordinated with 3 cysteines and an exchangeable S-adenosyl-L-methionine.</text>
</comment>
<comment type="subcellular location">
    <subcellularLocation>
        <location evidence="1">Cytoplasm</location>
    </subcellularLocation>
</comment>
<comment type="miscellaneous">
    <text evidence="1">Reaction proceeds by a ping-pong mechanism involving intermediate methylation of a conserved cysteine residue.</text>
</comment>
<comment type="similarity">
    <text evidence="1">Belongs to the radical SAM superfamily. RlmN family.</text>
</comment>
<proteinExistence type="inferred from homology"/>
<reference key="1">
    <citation type="journal article" date="2010" name="Environ. Microbiol.">
        <title>The genome of Syntrophomonas wolfei: new insights into syntrophic metabolism and biohydrogen production.</title>
        <authorList>
            <person name="Sieber J.R."/>
            <person name="Sims D.R."/>
            <person name="Han C."/>
            <person name="Kim E."/>
            <person name="Lykidis A."/>
            <person name="Lapidus A.L."/>
            <person name="McDonnald E."/>
            <person name="Rohlin L."/>
            <person name="Culley D.E."/>
            <person name="Gunsalus R."/>
            <person name="McInerney M.J."/>
        </authorList>
    </citation>
    <scope>NUCLEOTIDE SEQUENCE [LARGE SCALE GENOMIC DNA]</scope>
    <source>
        <strain>DSM 2245B / Goettingen</strain>
    </source>
</reference>
<accession>Q0AXL8</accession>
<protein>
    <recommendedName>
        <fullName evidence="1">Probable dual-specificity RNA methyltransferase RlmN</fullName>
        <ecNumber evidence="1">2.1.1.192</ecNumber>
    </recommendedName>
    <alternativeName>
        <fullName evidence="1">23S rRNA (adenine(2503)-C(2))-methyltransferase</fullName>
    </alternativeName>
    <alternativeName>
        <fullName evidence="1">23S rRNA m2A2503 methyltransferase</fullName>
    </alternativeName>
    <alternativeName>
        <fullName evidence="1">Ribosomal RNA large subunit methyltransferase N</fullName>
    </alternativeName>
    <alternativeName>
        <fullName evidence="1">tRNA (adenine(37)-C(2))-methyltransferase</fullName>
    </alternativeName>
    <alternativeName>
        <fullName evidence="1">tRNA m2A37 methyltransferase</fullName>
    </alternativeName>
</protein>
<sequence>MNSIEKKQLLGLDLNQMEEFLLGLEEPRFRGRQVYKWIYQKECSSFYEMSDLPRSLRKKLDEKARVSIPRVLKQRVGKDGSRKFLMELDDKKKIECVLLPQSRDKKSSYTLCLSTQVGCPIACSFCATGQSGFQRNLKAFEIIGQYLGSKKELSKRLKSPRAELISNVVYMGMGEPLLNYDEVIKSVHMLNDPRGINLGQRRITISTSGEVAGIKKLAQENIQLTLAISLHACDNSLRDQLIPLNRKYPLEVLFPAIEDYIAFTGRRVTFEYLLLDEVNMSRNDANKMVKLLKPLLANLNLIPYNEIEGLPFKKPETAKIWQFYQWLQDGGLNVSIREERGSDINAACGQLRSDYRR</sequence>
<evidence type="ECO:0000255" key="1">
    <source>
        <dbReference type="HAMAP-Rule" id="MF_01849"/>
    </source>
</evidence>
<evidence type="ECO:0000255" key="2">
    <source>
        <dbReference type="PROSITE-ProRule" id="PRU01266"/>
    </source>
</evidence>
<organism>
    <name type="scientific">Syntrophomonas wolfei subsp. wolfei (strain DSM 2245B / Goettingen)</name>
    <dbReference type="NCBI Taxonomy" id="335541"/>
    <lineage>
        <taxon>Bacteria</taxon>
        <taxon>Bacillati</taxon>
        <taxon>Bacillota</taxon>
        <taxon>Clostridia</taxon>
        <taxon>Eubacteriales</taxon>
        <taxon>Syntrophomonadaceae</taxon>
        <taxon>Syntrophomonas</taxon>
    </lineage>
</organism>
<name>RLMN_SYNWW</name>